<keyword id="KW-0963">Cytoplasm</keyword>
<keyword id="KW-0227">DNA damage</keyword>
<keyword id="KW-0233">DNA recombination</keyword>
<keyword id="KW-0234">DNA repair</keyword>
<keyword id="KW-0238">DNA-binding</keyword>
<keyword id="KW-0255">Endonuclease</keyword>
<keyword id="KW-0378">Hydrolase</keyword>
<keyword id="KW-0460">Magnesium</keyword>
<keyword id="KW-0479">Metal-binding</keyword>
<keyword id="KW-0540">Nuclease</keyword>
<keyword id="KW-1185">Reference proteome</keyword>
<sequence>MVVLGVDPGSLKTGYGVVRQDSSGFSVLTCGVIRLHSGKSHAERIGQIYRELEEIINSTKPRRVALETVFLSKNAQSALKLGQVRGAVIALSMNTDLELHEYAPREVKSAVTGRGSASKEQVAFMVTRMLQVTGHITSYDVTDALGLALCDLLRIGNRAAQEPAQGISRGNKNWTGFVRAFPEMVVR</sequence>
<protein>
    <recommendedName>
        <fullName evidence="1">Crossover junction endodeoxyribonuclease RuvC</fullName>
        <ecNumber evidence="1">3.1.21.10</ecNumber>
    </recommendedName>
    <alternativeName>
        <fullName evidence="1">Holliday junction nuclease RuvC</fullName>
    </alternativeName>
    <alternativeName>
        <fullName evidence="1">Holliday junction resolvase RuvC</fullName>
    </alternativeName>
</protein>
<accession>A1BDW9</accession>
<dbReference type="EC" id="3.1.21.10" evidence="1"/>
<dbReference type="EMBL" id="CP000492">
    <property type="protein sequence ID" value="ABL64596.1"/>
    <property type="molecule type" value="Genomic_DNA"/>
</dbReference>
<dbReference type="RefSeq" id="WP_011744429.1">
    <property type="nucleotide sequence ID" value="NC_008639.1"/>
</dbReference>
<dbReference type="SMR" id="A1BDW9"/>
<dbReference type="STRING" id="290317.Cpha266_0539"/>
<dbReference type="KEGG" id="cph:Cpha266_0539"/>
<dbReference type="eggNOG" id="COG0817">
    <property type="taxonomic scope" value="Bacteria"/>
</dbReference>
<dbReference type="HOGENOM" id="CLU_091257_3_1_10"/>
<dbReference type="OrthoDB" id="9805499at2"/>
<dbReference type="Proteomes" id="UP000008701">
    <property type="component" value="Chromosome"/>
</dbReference>
<dbReference type="GO" id="GO:0005737">
    <property type="term" value="C:cytoplasm"/>
    <property type="evidence" value="ECO:0007669"/>
    <property type="project" value="UniProtKB-SubCell"/>
</dbReference>
<dbReference type="GO" id="GO:0048476">
    <property type="term" value="C:Holliday junction resolvase complex"/>
    <property type="evidence" value="ECO:0007669"/>
    <property type="project" value="UniProtKB-UniRule"/>
</dbReference>
<dbReference type="GO" id="GO:0008821">
    <property type="term" value="F:crossover junction DNA endonuclease activity"/>
    <property type="evidence" value="ECO:0007669"/>
    <property type="project" value="UniProtKB-UniRule"/>
</dbReference>
<dbReference type="GO" id="GO:0003677">
    <property type="term" value="F:DNA binding"/>
    <property type="evidence" value="ECO:0007669"/>
    <property type="project" value="UniProtKB-KW"/>
</dbReference>
<dbReference type="GO" id="GO:0000287">
    <property type="term" value="F:magnesium ion binding"/>
    <property type="evidence" value="ECO:0007669"/>
    <property type="project" value="UniProtKB-UniRule"/>
</dbReference>
<dbReference type="GO" id="GO:0006310">
    <property type="term" value="P:DNA recombination"/>
    <property type="evidence" value="ECO:0007669"/>
    <property type="project" value="UniProtKB-UniRule"/>
</dbReference>
<dbReference type="GO" id="GO:0006281">
    <property type="term" value="P:DNA repair"/>
    <property type="evidence" value="ECO:0007669"/>
    <property type="project" value="UniProtKB-UniRule"/>
</dbReference>
<dbReference type="CDD" id="cd16962">
    <property type="entry name" value="RuvC"/>
    <property type="match status" value="1"/>
</dbReference>
<dbReference type="FunFam" id="3.30.420.10:FF:000002">
    <property type="entry name" value="Crossover junction endodeoxyribonuclease RuvC"/>
    <property type="match status" value="1"/>
</dbReference>
<dbReference type="Gene3D" id="3.30.420.10">
    <property type="entry name" value="Ribonuclease H-like superfamily/Ribonuclease H"/>
    <property type="match status" value="1"/>
</dbReference>
<dbReference type="HAMAP" id="MF_00034">
    <property type="entry name" value="RuvC"/>
    <property type="match status" value="1"/>
</dbReference>
<dbReference type="InterPro" id="IPR012337">
    <property type="entry name" value="RNaseH-like_sf"/>
</dbReference>
<dbReference type="InterPro" id="IPR036397">
    <property type="entry name" value="RNaseH_sf"/>
</dbReference>
<dbReference type="InterPro" id="IPR020563">
    <property type="entry name" value="X-over_junc_endoDNase_Mg_BS"/>
</dbReference>
<dbReference type="InterPro" id="IPR002176">
    <property type="entry name" value="X-over_junc_endoDNase_RuvC"/>
</dbReference>
<dbReference type="NCBIfam" id="TIGR00228">
    <property type="entry name" value="ruvC"/>
    <property type="match status" value="1"/>
</dbReference>
<dbReference type="PANTHER" id="PTHR30194">
    <property type="entry name" value="CROSSOVER JUNCTION ENDODEOXYRIBONUCLEASE RUVC"/>
    <property type="match status" value="1"/>
</dbReference>
<dbReference type="PANTHER" id="PTHR30194:SF3">
    <property type="entry name" value="CROSSOVER JUNCTION ENDODEOXYRIBONUCLEASE RUVC"/>
    <property type="match status" value="1"/>
</dbReference>
<dbReference type="Pfam" id="PF02075">
    <property type="entry name" value="RuvC"/>
    <property type="match status" value="1"/>
</dbReference>
<dbReference type="PRINTS" id="PR00696">
    <property type="entry name" value="RSOLVASERUVC"/>
</dbReference>
<dbReference type="SUPFAM" id="SSF53098">
    <property type="entry name" value="Ribonuclease H-like"/>
    <property type="match status" value="1"/>
</dbReference>
<dbReference type="PROSITE" id="PS01321">
    <property type="entry name" value="RUVC"/>
    <property type="match status" value="1"/>
</dbReference>
<feature type="chain" id="PRO_1000002743" description="Crossover junction endodeoxyribonuclease RuvC">
    <location>
        <begin position="1"/>
        <end position="187"/>
    </location>
</feature>
<feature type="active site" evidence="1">
    <location>
        <position position="7"/>
    </location>
</feature>
<feature type="active site" evidence="1">
    <location>
        <position position="67"/>
    </location>
</feature>
<feature type="active site" evidence="1">
    <location>
        <position position="140"/>
    </location>
</feature>
<feature type="binding site" evidence="1">
    <location>
        <position position="7"/>
    </location>
    <ligand>
        <name>Mg(2+)</name>
        <dbReference type="ChEBI" id="CHEBI:18420"/>
        <label>1</label>
    </ligand>
</feature>
<feature type="binding site" evidence="1">
    <location>
        <position position="67"/>
    </location>
    <ligand>
        <name>Mg(2+)</name>
        <dbReference type="ChEBI" id="CHEBI:18420"/>
        <label>2</label>
    </ligand>
</feature>
<feature type="binding site" evidence="1">
    <location>
        <position position="140"/>
    </location>
    <ligand>
        <name>Mg(2+)</name>
        <dbReference type="ChEBI" id="CHEBI:18420"/>
        <label>1</label>
    </ligand>
</feature>
<evidence type="ECO:0000255" key="1">
    <source>
        <dbReference type="HAMAP-Rule" id="MF_00034"/>
    </source>
</evidence>
<reference key="1">
    <citation type="submission" date="2006-12" db="EMBL/GenBank/DDBJ databases">
        <title>Complete sequence of Chlorobium phaeobacteroides DSM 266.</title>
        <authorList>
            <consortium name="US DOE Joint Genome Institute"/>
            <person name="Copeland A."/>
            <person name="Lucas S."/>
            <person name="Lapidus A."/>
            <person name="Barry K."/>
            <person name="Detter J.C."/>
            <person name="Glavina del Rio T."/>
            <person name="Hammon N."/>
            <person name="Israni S."/>
            <person name="Pitluck S."/>
            <person name="Goltsman E."/>
            <person name="Schmutz J."/>
            <person name="Larimer F."/>
            <person name="Land M."/>
            <person name="Hauser L."/>
            <person name="Mikhailova N."/>
            <person name="Li T."/>
            <person name="Overmann J."/>
            <person name="Bryant D.A."/>
            <person name="Richardson P."/>
        </authorList>
    </citation>
    <scope>NUCLEOTIDE SEQUENCE [LARGE SCALE GENOMIC DNA]</scope>
    <source>
        <strain>DSM 266 / SMG 266 / 2430</strain>
    </source>
</reference>
<organism>
    <name type="scientific">Chlorobium phaeobacteroides (strain DSM 266 / SMG 266 / 2430)</name>
    <dbReference type="NCBI Taxonomy" id="290317"/>
    <lineage>
        <taxon>Bacteria</taxon>
        <taxon>Pseudomonadati</taxon>
        <taxon>Chlorobiota</taxon>
        <taxon>Chlorobiia</taxon>
        <taxon>Chlorobiales</taxon>
        <taxon>Chlorobiaceae</taxon>
        <taxon>Chlorobium/Pelodictyon group</taxon>
        <taxon>Chlorobium</taxon>
    </lineage>
</organism>
<comment type="function">
    <text evidence="1">The RuvA-RuvB-RuvC complex processes Holliday junction (HJ) DNA during genetic recombination and DNA repair. Endonuclease that resolves HJ intermediates. Cleaves cruciform DNA by making single-stranded nicks across the HJ at symmetrical positions within the homologous arms, yielding a 5'-phosphate and a 3'-hydroxyl group; requires a central core of homology in the junction. The consensus cleavage sequence is 5'-(A/T)TT(C/G)-3'. Cleavage occurs on the 3'-side of the TT dinucleotide at the point of strand exchange. HJ branch migration catalyzed by RuvA-RuvB allows RuvC to scan DNA until it finds its consensus sequence, where it cleaves and resolves the cruciform DNA.</text>
</comment>
<comment type="catalytic activity">
    <reaction evidence="1">
        <text>Endonucleolytic cleavage at a junction such as a reciprocal single-stranded crossover between two homologous DNA duplexes (Holliday junction).</text>
        <dbReference type="EC" id="3.1.21.10"/>
    </reaction>
</comment>
<comment type="cofactor">
    <cofactor evidence="1">
        <name>Mg(2+)</name>
        <dbReference type="ChEBI" id="CHEBI:18420"/>
    </cofactor>
    <text evidence="1">Binds 2 Mg(2+) ion per subunit.</text>
</comment>
<comment type="subunit">
    <text evidence="1">Homodimer which binds Holliday junction (HJ) DNA. The HJ becomes 2-fold symmetrical on binding to RuvC with unstacked arms; it has a different conformation from HJ DNA in complex with RuvA. In the full resolvosome a probable DNA-RuvA(4)-RuvB(12)-RuvC(2) complex forms which resolves the HJ.</text>
</comment>
<comment type="subcellular location">
    <subcellularLocation>
        <location evidence="1">Cytoplasm</location>
    </subcellularLocation>
</comment>
<comment type="similarity">
    <text evidence="1">Belongs to the RuvC family.</text>
</comment>
<gene>
    <name evidence="1" type="primary">ruvC</name>
    <name type="ordered locus">Cpha266_0539</name>
</gene>
<name>RUVC_CHLPD</name>
<proteinExistence type="inferred from homology"/>